<organism>
    <name type="scientific">Mus musculus</name>
    <name type="common">Mouse</name>
    <dbReference type="NCBI Taxonomy" id="10090"/>
    <lineage>
        <taxon>Eukaryota</taxon>
        <taxon>Metazoa</taxon>
        <taxon>Chordata</taxon>
        <taxon>Craniata</taxon>
        <taxon>Vertebrata</taxon>
        <taxon>Euteleostomi</taxon>
        <taxon>Mammalia</taxon>
        <taxon>Eutheria</taxon>
        <taxon>Euarchontoglires</taxon>
        <taxon>Glires</taxon>
        <taxon>Rodentia</taxon>
        <taxon>Myomorpha</taxon>
        <taxon>Muroidea</taxon>
        <taxon>Muridae</taxon>
        <taxon>Murinae</taxon>
        <taxon>Mus</taxon>
        <taxon>Mus</taxon>
    </lineage>
</organism>
<evidence type="ECO:0000250" key="1"/>
<evidence type="ECO:0000250" key="2">
    <source>
        <dbReference type="UniProtKB" id="Q9H0E9"/>
    </source>
</evidence>
<evidence type="ECO:0000255" key="3"/>
<evidence type="ECO:0000255" key="4">
    <source>
        <dbReference type="PROSITE-ProRule" id="PRU00035"/>
    </source>
</evidence>
<evidence type="ECO:0000256" key="5">
    <source>
        <dbReference type="SAM" id="MobiDB-lite"/>
    </source>
</evidence>
<evidence type="ECO:0000303" key="6">
    <source>
    </source>
</evidence>
<evidence type="ECO:0000305" key="7"/>
<evidence type="ECO:0007744" key="8">
    <source>
    </source>
</evidence>
<evidence type="ECO:0007744" key="9">
    <source>
    </source>
</evidence>
<name>BRD8_MOUSE</name>
<proteinExistence type="evidence at protein level"/>
<accession>Q8R3B7</accession>
<accession>Q3TSZ2</accession>
<accession>Q8C049</accession>
<accession>Q8R583</accession>
<accession>Q8VDP0</accession>
<gene>
    <name type="primary">Brd8</name>
</gene>
<comment type="function">
    <text>May act as a coactivator during transcriptional activation by hormone-activated nuclear receptors (NR). Stimulates transcriptional activation by AR/DHTR, ESR1/NR3A1, RXRA/NR2B1 and THRB/ERBA2. Component of the NuA4 histone acetyltransferase (HAT) complex which is involved in transcriptional activation of select genes principally by acetylation of nucleosomal histones H4 and H2A. This modification may both alter nucleosome - DNA interactions and promote interaction of the modified histones with other proteins which positively regulate transcription. This complex may be required for the activation of transcriptional programs associated with oncogene and proto-oncogene mediated growth induction, tumor suppressor mediated growth arrest and replicative senescence, apoptosis, and DNA repair. NuA4 may also play a direct role in DNA repair when recruited to sites of DNA damage. Component of a SWR1-like complex that specifically mediates the removal of histone H2A.Z/H2AZ1 from the nucleosome.</text>
</comment>
<comment type="subunit">
    <text evidence="1">Component of the NuA4 histone acetyltransferase complex which contains the catalytic subunit KAT5/TIP60 and the subunits EP400, TRRAP/PAF400, BRD8/SMAP, EPC1, DMAP1/DNMAP1, RUVBL1/TIP49, RUVBL2, ING3, actin, ACTL6A/BAF53A, MORF4L1/MRG15, MORF4L2/MRGX, MRGBP, YEATS4/GAS41, VPS72/YL1 and MEAF6. Component of a NuA4-related complex which contains EP400, TRRAP/PAF400, SRCAP, BRD8/SMAP, EPC1, DMAP1/DNMAP1, RUVBL1/TIP49, RUVBL2, actin, ACTL6A/BAF53A, VPS72 and YEATS4/GAS41. BRD8 isoform 2 interacts with RXRA/NR2B1 and THRB/ERBA2. Component of a SWR1-like complex (By similarity).</text>
</comment>
<comment type="subcellular location">
    <subcellularLocation>
        <location evidence="2">Nucleus</location>
    </subcellularLocation>
</comment>
<comment type="alternative products">
    <event type="alternative splicing"/>
    <isoform>
        <id>Q8R3B7-1</id>
        <name>1</name>
        <sequence type="displayed"/>
    </isoform>
    <isoform>
        <id>Q8R3B7-2</id>
        <name>2</name>
        <sequence type="described" ref="VSP_038218"/>
    </isoform>
</comment>
<comment type="sequence caution" evidence="7">
    <conflict type="miscellaneous discrepancy">
        <sequence resource="EMBL-CDS" id="AAH23160"/>
    </conflict>
    <text>Intron retention.</text>
</comment>
<comment type="sequence caution" evidence="7">
    <conflict type="erroneous initiation">
        <sequence resource="EMBL-CDS" id="AAH25644"/>
    </conflict>
</comment>
<comment type="sequence caution" evidence="7">
    <conflict type="erroneous initiation">
        <sequence resource="EMBL-CDS" id="BAC27812"/>
    </conflict>
</comment>
<reference key="1">
    <citation type="journal article" date="2005" name="Science">
        <title>The transcriptional landscape of the mammalian genome.</title>
        <authorList>
            <person name="Carninci P."/>
            <person name="Kasukawa T."/>
            <person name="Katayama S."/>
            <person name="Gough J."/>
            <person name="Frith M.C."/>
            <person name="Maeda N."/>
            <person name="Oyama R."/>
            <person name="Ravasi T."/>
            <person name="Lenhard B."/>
            <person name="Wells C."/>
            <person name="Kodzius R."/>
            <person name="Shimokawa K."/>
            <person name="Bajic V.B."/>
            <person name="Brenner S.E."/>
            <person name="Batalov S."/>
            <person name="Forrest A.R."/>
            <person name="Zavolan M."/>
            <person name="Davis M.J."/>
            <person name="Wilming L.G."/>
            <person name="Aidinis V."/>
            <person name="Allen J.E."/>
            <person name="Ambesi-Impiombato A."/>
            <person name="Apweiler R."/>
            <person name="Aturaliya R.N."/>
            <person name="Bailey T.L."/>
            <person name="Bansal M."/>
            <person name="Baxter L."/>
            <person name="Beisel K.W."/>
            <person name="Bersano T."/>
            <person name="Bono H."/>
            <person name="Chalk A.M."/>
            <person name="Chiu K.P."/>
            <person name="Choudhary V."/>
            <person name="Christoffels A."/>
            <person name="Clutterbuck D.R."/>
            <person name="Crowe M.L."/>
            <person name="Dalla E."/>
            <person name="Dalrymple B.P."/>
            <person name="de Bono B."/>
            <person name="Della Gatta G."/>
            <person name="di Bernardo D."/>
            <person name="Down T."/>
            <person name="Engstrom P."/>
            <person name="Fagiolini M."/>
            <person name="Faulkner G."/>
            <person name="Fletcher C.F."/>
            <person name="Fukushima T."/>
            <person name="Furuno M."/>
            <person name="Futaki S."/>
            <person name="Gariboldi M."/>
            <person name="Georgii-Hemming P."/>
            <person name="Gingeras T.R."/>
            <person name="Gojobori T."/>
            <person name="Green R.E."/>
            <person name="Gustincich S."/>
            <person name="Harbers M."/>
            <person name="Hayashi Y."/>
            <person name="Hensch T.K."/>
            <person name="Hirokawa N."/>
            <person name="Hill D."/>
            <person name="Huminiecki L."/>
            <person name="Iacono M."/>
            <person name="Ikeo K."/>
            <person name="Iwama A."/>
            <person name="Ishikawa T."/>
            <person name="Jakt M."/>
            <person name="Kanapin A."/>
            <person name="Katoh M."/>
            <person name="Kawasawa Y."/>
            <person name="Kelso J."/>
            <person name="Kitamura H."/>
            <person name="Kitano H."/>
            <person name="Kollias G."/>
            <person name="Krishnan S.P."/>
            <person name="Kruger A."/>
            <person name="Kummerfeld S.K."/>
            <person name="Kurochkin I.V."/>
            <person name="Lareau L.F."/>
            <person name="Lazarevic D."/>
            <person name="Lipovich L."/>
            <person name="Liu J."/>
            <person name="Liuni S."/>
            <person name="McWilliam S."/>
            <person name="Madan Babu M."/>
            <person name="Madera M."/>
            <person name="Marchionni L."/>
            <person name="Matsuda H."/>
            <person name="Matsuzawa S."/>
            <person name="Miki H."/>
            <person name="Mignone F."/>
            <person name="Miyake S."/>
            <person name="Morris K."/>
            <person name="Mottagui-Tabar S."/>
            <person name="Mulder N."/>
            <person name="Nakano N."/>
            <person name="Nakauchi H."/>
            <person name="Ng P."/>
            <person name="Nilsson R."/>
            <person name="Nishiguchi S."/>
            <person name="Nishikawa S."/>
            <person name="Nori F."/>
            <person name="Ohara O."/>
            <person name="Okazaki Y."/>
            <person name="Orlando V."/>
            <person name="Pang K.C."/>
            <person name="Pavan W.J."/>
            <person name="Pavesi G."/>
            <person name="Pesole G."/>
            <person name="Petrovsky N."/>
            <person name="Piazza S."/>
            <person name="Reed J."/>
            <person name="Reid J.F."/>
            <person name="Ring B.Z."/>
            <person name="Ringwald M."/>
            <person name="Rost B."/>
            <person name="Ruan Y."/>
            <person name="Salzberg S.L."/>
            <person name="Sandelin A."/>
            <person name="Schneider C."/>
            <person name="Schoenbach C."/>
            <person name="Sekiguchi K."/>
            <person name="Semple C.A."/>
            <person name="Seno S."/>
            <person name="Sessa L."/>
            <person name="Sheng Y."/>
            <person name="Shibata Y."/>
            <person name="Shimada H."/>
            <person name="Shimada K."/>
            <person name="Silva D."/>
            <person name="Sinclair B."/>
            <person name="Sperling S."/>
            <person name="Stupka E."/>
            <person name="Sugiura K."/>
            <person name="Sultana R."/>
            <person name="Takenaka Y."/>
            <person name="Taki K."/>
            <person name="Tammoja K."/>
            <person name="Tan S.L."/>
            <person name="Tang S."/>
            <person name="Taylor M.S."/>
            <person name="Tegner J."/>
            <person name="Teichmann S.A."/>
            <person name="Ueda H.R."/>
            <person name="van Nimwegen E."/>
            <person name="Verardo R."/>
            <person name="Wei C.L."/>
            <person name="Yagi K."/>
            <person name="Yamanishi H."/>
            <person name="Zabarovsky E."/>
            <person name="Zhu S."/>
            <person name="Zimmer A."/>
            <person name="Hide W."/>
            <person name="Bult C."/>
            <person name="Grimmond S.M."/>
            <person name="Teasdale R.D."/>
            <person name="Liu E.T."/>
            <person name="Brusic V."/>
            <person name="Quackenbush J."/>
            <person name="Wahlestedt C."/>
            <person name="Mattick J.S."/>
            <person name="Hume D.A."/>
            <person name="Kai C."/>
            <person name="Sasaki D."/>
            <person name="Tomaru Y."/>
            <person name="Fukuda S."/>
            <person name="Kanamori-Katayama M."/>
            <person name="Suzuki M."/>
            <person name="Aoki J."/>
            <person name="Arakawa T."/>
            <person name="Iida J."/>
            <person name="Imamura K."/>
            <person name="Itoh M."/>
            <person name="Kato T."/>
            <person name="Kawaji H."/>
            <person name="Kawagashira N."/>
            <person name="Kawashima T."/>
            <person name="Kojima M."/>
            <person name="Kondo S."/>
            <person name="Konno H."/>
            <person name="Nakano K."/>
            <person name="Ninomiya N."/>
            <person name="Nishio T."/>
            <person name="Okada M."/>
            <person name="Plessy C."/>
            <person name="Shibata K."/>
            <person name="Shiraki T."/>
            <person name="Suzuki S."/>
            <person name="Tagami M."/>
            <person name="Waki K."/>
            <person name="Watahiki A."/>
            <person name="Okamura-Oho Y."/>
            <person name="Suzuki H."/>
            <person name="Kawai J."/>
            <person name="Hayashizaki Y."/>
        </authorList>
    </citation>
    <scope>NUCLEOTIDE SEQUENCE [LARGE SCALE MRNA] (ISOFORMS 1 AND 2)</scope>
    <source>
        <strain>C57BL/6J</strain>
        <tissue>Embryo</tissue>
        <tissue>Olfactory bulb</tissue>
    </source>
</reference>
<reference key="2">
    <citation type="journal article" date="2004" name="Genome Res.">
        <title>The status, quality, and expansion of the NIH full-length cDNA project: the Mammalian Gene Collection (MGC).</title>
        <authorList>
            <consortium name="The MGC Project Team"/>
        </authorList>
    </citation>
    <scope>NUCLEOTIDE SEQUENCE [LARGE SCALE MRNA] (ISOFORM 1)</scope>
    <source>
        <strain>FVB/N</strain>
        <tissue>Mammary tumor</tissue>
    </source>
</reference>
<reference key="3">
    <citation type="journal article" date="2010" name="Cell">
        <title>A tissue-specific atlas of mouse protein phosphorylation and expression.</title>
        <authorList>
            <person name="Huttlin E.L."/>
            <person name="Jedrychowski M.P."/>
            <person name="Elias J.E."/>
            <person name="Goswami T."/>
            <person name="Rad R."/>
            <person name="Beausoleil S.A."/>
            <person name="Villen J."/>
            <person name="Haas W."/>
            <person name="Sowa M.E."/>
            <person name="Gygi S.P."/>
        </authorList>
    </citation>
    <scope>PHOSPHORYLATION [LARGE SCALE ANALYSIS] AT SER-456 AND SER-460</scope>
    <scope>IDENTIFICATION BY MASS SPECTROMETRY [LARGE SCALE ANALYSIS]</scope>
    <source>
        <tissue>Brain</tissue>
        <tissue>Kidney</tissue>
        <tissue>Lung</tissue>
        <tissue>Spleen</tissue>
        <tissue>Testis</tissue>
    </source>
</reference>
<reference key="4">
    <citation type="journal article" date="2013" name="Mol. Cell">
        <title>SIRT5-mediated lysine desuccinylation impacts diverse metabolic pathways.</title>
        <authorList>
            <person name="Park J."/>
            <person name="Chen Y."/>
            <person name="Tishkoff D.X."/>
            <person name="Peng C."/>
            <person name="Tan M."/>
            <person name="Dai L."/>
            <person name="Xie Z."/>
            <person name="Zhang Y."/>
            <person name="Zwaans B.M."/>
            <person name="Skinner M.E."/>
            <person name="Lombard D.B."/>
            <person name="Zhao Y."/>
        </authorList>
    </citation>
    <scope>ACETYLATION [LARGE SCALE ANALYSIS] AT LYS-85 AND LYS-554</scope>
    <scope>IDENTIFICATION BY MASS SPECTROMETRY [LARGE SCALE ANALYSIS]</scope>
    <source>
        <tissue>Embryonic fibroblast</tissue>
    </source>
</reference>
<keyword id="KW-0007">Acetylation</keyword>
<keyword id="KW-0025">Alternative splicing</keyword>
<keyword id="KW-0103">Bromodomain</keyword>
<keyword id="KW-0156">Chromatin regulator</keyword>
<keyword id="KW-0175">Coiled coil</keyword>
<keyword id="KW-0341">Growth regulation</keyword>
<keyword id="KW-1017">Isopeptide bond</keyword>
<keyword id="KW-0539">Nucleus</keyword>
<keyword id="KW-0597">Phosphoprotein</keyword>
<keyword id="KW-1185">Reference proteome</keyword>
<keyword id="KW-0804">Transcription</keyword>
<keyword id="KW-0805">Transcription regulation</keyword>
<keyword id="KW-0832">Ubl conjugation</keyword>
<protein>
    <recommendedName>
        <fullName>Bromodomain-containing protein 8</fullName>
    </recommendedName>
</protein>
<sequence>MATGTGKHKLLSTGPTEPWSIREKLCLASSVMRSGDQNWVSVSRAIKPFAEPGRPPDWFSQKHCASQYSELLETTETPKRKRGEKGEVVETVEDVIVRKLTAERVEELKKVIKETQERYRRLKRDAELIQAGHMDSRLDELCNDIAMKKKLEEEEAEVKRKATDAAYQARQAVKTPPRRLPTVMVRSPVDSASPGGDYPLGDLTPTTMEEATSGVTPGTLPSTPVTSFPGIPDTLPPGSAPLEAPMTPITDDSPQKKMLGQKATPPPSPLLSELLKKGSLLPTSPRLVNESEMPVPPGHLNSTGVLLEVGGVLPMIHGGEIQPTTSAVAASPAASGAPTLSRLLEAGPTQFTTPLPSFTTVASEPPVKLVPPPVESVSQATIVMMPALPAPSSAAAVSTSESGAPVSQPEPCVPLEAVGDPHTVTVSMDSNEISMIINSIKEECFRSGVAEAPGGSKAPSIDGKEDLDLAEKMDIAVSYTGEELDFETVGDIIAIIEDKVDDHPEVLDVAAVEAALSFCEENDDPQSLPGPWEHPIQQERDKPVPLPAPEMTVKQERLDFEESENKGLHDLVDIRDSGVEIKVEPTEPEPGMSGAEIVAGVGPVPSMEPPELRSQDSDEEPRSSAAGDIGEADGSSGKGDERPLSAVKTEASPESMLSPSHGSNLIEDPLEAETQHKFEMSDSLKEESGTIFGSQIKDAPGDDEEEDGVSEAASLEEPKEEDQGEGYLSEMDNEPPVSESDDGFSIHNATLQSHTLADSIPSSPASSQFSVCSEDQEAIQAQKIWKKAIMLVWRAAANHRYANVFLQPVTDDIAPGYHSIVQRPMDLSTIKKNIENGLIRSTAEFQRDIMLMFQNAVMYNSSDHDVYHMAVEMQRDVLEQIQQFLATQLIMQTSESGISAKSLRGRDSTRKQDASEKDSVPMGSPAFLLSLFDGGTRGRRCAIEADMKMKK</sequence>
<dbReference type="EMBL" id="AK032320">
    <property type="protein sequence ID" value="BAC27812.1"/>
    <property type="status" value="ALT_INIT"/>
    <property type="molecule type" value="mRNA"/>
</dbReference>
<dbReference type="EMBL" id="AK161689">
    <property type="protein sequence ID" value="BAE36533.1"/>
    <property type="molecule type" value="mRNA"/>
</dbReference>
<dbReference type="EMBL" id="BC023160">
    <property type="protein sequence ID" value="AAH23160.1"/>
    <property type="status" value="ALT_SEQ"/>
    <property type="molecule type" value="mRNA"/>
</dbReference>
<dbReference type="EMBL" id="BC025644">
    <property type="protein sequence ID" value="AAH25644.1"/>
    <property type="status" value="ALT_INIT"/>
    <property type="molecule type" value="mRNA"/>
</dbReference>
<dbReference type="CCDS" id="CCDS50248.1">
    <molecule id="Q8R3B7-1"/>
</dbReference>
<dbReference type="CCDS" id="CCDS70879.1">
    <molecule id="Q8R3B7-2"/>
</dbReference>
<dbReference type="RefSeq" id="NP_001276535.1">
    <molecule id="Q8R3B7-2"/>
    <property type="nucleotide sequence ID" value="NM_001289606.1"/>
</dbReference>
<dbReference type="RefSeq" id="NP_001276536.1">
    <property type="nucleotide sequence ID" value="NM_001289607.1"/>
</dbReference>
<dbReference type="RefSeq" id="NP_084423.2">
    <molecule id="Q8R3B7-1"/>
    <property type="nucleotide sequence ID" value="NM_030147.3"/>
</dbReference>
<dbReference type="SMR" id="Q8R3B7"/>
<dbReference type="BioGRID" id="219557">
    <property type="interactions" value="5"/>
</dbReference>
<dbReference type="ComplexPortal" id="CPX-990">
    <property type="entry name" value="NuA4 histone acetyltransferase complex"/>
</dbReference>
<dbReference type="FunCoup" id="Q8R3B7">
    <property type="interactions" value="5317"/>
</dbReference>
<dbReference type="IntAct" id="Q8R3B7">
    <property type="interactions" value="7"/>
</dbReference>
<dbReference type="MINT" id="Q8R3B7"/>
<dbReference type="STRING" id="10090.ENSMUSP00000003876"/>
<dbReference type="GlyGen" id="Q8R3B7">
    <property type="glycosylation" value="4 sites, 1 O-linked glycan (2 sites)"/>
</dbReference>
<dbReference type="iPTMnet" id="Q8R3B7"/>
<dbReference type="PhosphoSitePlus" id="Q8R3B7"/>
<dbReference type="jPOST" id="Q8R3B7"/>
<dbReference type="PaxDb" id="10090-ENSMUSP00000003876"/>
<dbReference type="PeptideAtlas" id="Q8R3B7"/>
<dbReference type="ProteomicsDB" id="273799">
    <molecule id="Q8R3B7-1"/>
</dbReference>
<dbReference type="ProteomicsDB" id="273800">
    <molecule id="Q8R3B7-2"/>
</dbReference>
<dbReference type="Pumba" id="Q8R3B7"/>
<dbReference type="Antibodypedia" id="678">
    <property type="antibodies" value="192 antibodies from 28 providers"/>
</dbReference>
<dbReference type="DNASU" id="78656"/>
<dbReference type="Ensembl" id="ENSMUST00000003876.10">
    <molecule id="Q8R3B7-1"/>
    <property type="protein sequence ID" value="ENSMUSP00000003876.4"/>
    <property type="gene ID" value="ENSMUSG00000003778.15"/>
</dbReference>
<dbReference type="Ensembl" id="ENSMUST00000097626.10">
    <molecule id="Q8R3B7-2"/>
    <property type="protein sequence ID" value="ENSMUSP00000095229.4"/>
    <property type="gene ID" value="ENSMUSG00000003778.15"/>
</dbReference>
<dbReference type="GeneID" id="78656"/>
<dbReference type="KEGG" id="mmu:78656"/>
<dbReference type="UCSC" id="uc008ekv.2">
    <molecule id="Q8R3B7-1"/>
    <property type="organism name" value="mouse"/>
</dbReference>
<dbReference type="UCSC" id="uc008ekx.2">
    <molecule id="Q8R3B7-2"/>
    <property type="organism name" value="mouse"/>
</dbReference>
<dbReference type="AGR" id="MGI:1925906"/>
<dbReference type="CTD" id="10902"/>
<dbReference type="MGI" id="MGI:1925906">
    <property type="gene designation" value="Brd8"/>
</dbReference>
<dbReference type="VEuPathDB" id="HostDB:ENSMUSG00000003778"/>
<dbReference type="eggNOG" id="ENOG502QRPS">
    <property type="taxonomic scope" value="Eukaryota"/>
</dbReference>
<dbReference type="GeneTree" id="ENSGT00530000064262"/>
<dbReference type="InParanoid" id="Q8R3B7"/>
<dbReference type="OMA" id="AYKPHTT"/>
<dbReference type="OrthoDB" id="1742084at2759"/>
<dbReference type="PhylomeDB" id="Q8R3B7"/>
<dbReference type="TreeFam" id="TF106422"/>
<dbReference type="BioGRID-ORCS" id="78656">
    <property type="hits" value="17 hits in 81 CRISPR screens"/>
</dbReference>
<dbReference type="ChiTaRS" id="Brd8">
    <property type="organism name" value="mouse"/>
</dbReference>
<dbReference type="PRO" id="PR:Q8R3B7"/>
<dbReference type="Proteomes" id="UP000000589">
    <property type="component" value="Chromosome 18"/>
</dbReference>
<dbReference type="RNAct" id="Q8R3B7">
    <property type="molecule type" value="protein"/>
</dbReference>
<dbReference type="Bgee" id="ENSMUSG00000003778">
    <property type="expression patterns" value="Expressed in floor plate of midbrain and 267 other cell types or tissues"/>
</dbReference>
<dbReference type="ExpressionAtlas" id="Q8R3B7">
    <property type="expression patterns" value="baseline and differential"/>
</dbReference>
<dbReference type="GO" id="GO:0005739">
    <property type="term" value="C:mitochondrion"/>
    <property type="evidence" value="ECO:0007669"/>
    <property type="project" value="Ensembl"/>
</dbReference>
<dbReference type="GO" id="GO:0035267">
    <property type="term" value="C:NuA4 histone acetyltransferase complex"/>
    <property type="evidence" value="ECO:0000250"/>
    <property type="project" value="UniProtKB"/>
</dbReference>
<dbReference type="GO" id="GO:0000786">
    <property type="term" value="C:nucleosome"/>
    <property type="evidence" value="ECO:0000266"/>
    <property type="project" value="ComplexPortal"/>
</dbReference>
<dbReference type="GO" id="GO:0000812">
    <property type="term" value="C:Swr1 complex"/>
    <property type="evidence" value="ECO:0000250"/>
    <property type="project" value="UniProtKB"/>
</dbReference>
<dbReference type="GO" id="GO:0046966">
    <property type="term" value="F:nuclear thyroid hormone receptor binding"/>
    <property type="evidence" value="ECO:0007669"/>
    <property type="project" value="Ensembl"/>
</dbReference>
<dbReference type="GO" id="GO:0003713">
    <property type="term" value="F:transcription coactivator activity"/>
    <property type="evidence" value="ECO:0007669"/>
    <property type="project" value="Ensembl"/>
</dbReference>
<dbReference type="GO" id="GO:0097067">
    <property type="term" value="P:cellular response to thyroid hormone stimulus"/>
    <property type="evidence" value="ECO:0007669"/>
    <property type="project" value="Ensembl"/>
</dbReference>
<dbReference type="GO" id="GO:0006325">
    <property type="term" value="P:chromatin organization"/>
    <property type="evidence" value="ECO:0007669"/>
    <property type="project" value="UniProtKB-KW"/>
</dbReference>
<dbReference type="GO" id="GO:0045893">
    <property type="term" value="P:positive regulation of DNA-templated transcription"/>
    <property type="evidence" value="ECO:0000303"/>
    <property type="project" value="ComplexPortal"/>
</dbReference>
<dbReference type="GO" id="GO:1905168">
    <property type="term" value="P:positive regulation of double-strand break repair via homologous recombination"/>
    <property type="evidence" value="ECO:0000266"/>
    <property type="project" value="ComplexPortal"/>
</dbReference>
<dbReference type="GO" id="GO:0045944">
    <property type="term" value="P:positive regulation of transcription by RNA polymerase II"/>
    <property type="evidence" value="ECO:0007669"/>
    <property type="project" value="Ensembl"/>
</dbReference>
<dbReference type="GO" id="GO:0042981">
    <property type="term" value="P:regulation of apoptotic process"/>
    <property type="evidence" value="ECO:0000303"/>
    <property type="project" value="ComplexPortal"/>
</dbReference>
<dbReference type="GO" id="GO:0051726">
    <property type="term" value="P:regulation of cell cycle"/>
    <property type="evidence" value="ECO:0000266"/>
    <property type="project" value="ComplexPortal"/>
</dbReference>
<dbReference type="GO" id="GO:2000779">
    <property type="term" value="P:regulation of double-strand break repair"/>
    <property type="evidence" value="ECO:0000303"/>
    <property type="project" value="ComplexPortal"/>
</dbReference>
<dbReference type="CDD" id="cd05507">
    <property type="entry name" value="Bromo_brd8_like"/>
    <property type="match status" value="1"/>
</dbReference>
<dbReference type="FunFam" id="1.20.920.10:FF:000016">
    <property type="entry name" value="bromodomain-containing protein 8 isoform X1"/>
    <property type="match status" value="1"/>
</dbReference>
<dbReference type="Gene3D" id="1.20.920.10">
    <property type="entry name" value="Bromodomain-like"/>
    <property type="match status" value="1"/>
</dbReference>
<dbReference type="InterPro" id="IPR037966">
    <property type="entry name" value="Brd8_Bromo_dom"/>
</dbReference>
<dbReference type="InterPro" id="IPR001487">
    <property type="entry name" value="Bromodomain"/>
</dbReference>
<dbReference type="InterPro" id="IPR036427">
    <property type="entry name" value="Bromodomain-like_sf"/>
</dbReference>
<dbReference type="PANTHER" id="PTHR15398">
    <property type="entry name" value="BROMODOMAIN-CONTAINING PROTEIN 8"/>
    <property type="match status" value="1"/>
</dbReference>
<dbReference type="PANTHER" id="PTHR15398:SF13">
    <property type="entry name" value="BROMODOMAIN-CONTAINING PROTEIN 8"/>
    <property type="match status" value="1"/>
</dbReference>
<dbReference type="Pfam" id="PF00439">
    <property type="entry name" value="Bromodomain"/>
    <property type="match status" value="1"/>
</dbReference>
<dbReference type="PRINTS" id="PR00503">
    <property type="entry name" value="BROMODOMAIN"/>
</dbReference>
<dbReference type="SMART" id="SM00297">
    <property type="entry name" value="BROMO"/>
    <property type="match status" value="1"/>
</dbReference>
<dbReference type="SUPFAM" id="SSF47370">
    <property type="entry name" value="Bromodomain"/>
    <property type="match status" value="1"/>
</dbReference>
<dbReference type="PROSITE" id="PS50014">
    <property type="entry name" value="BROMODOMAIN_2"/>
    <property type="match status" value="1"/>
</dbReference>
<feature type="chain" id="PRO_0000211186" description="Bromodomain-containing protein 8">
    <location>
        <begin position="1"/>
        <end position="951"/>
    </location>
</feature>
<feature type="domain" description="Bromo" evidence="4">
    <location>
        <begin position="779"/>
        <end position="884"/>
    </location>
</feature>
<feature type="region of interest" description="Disordered" evidence="5">
    <location>
        <begin position="161"/>
        <end position="273"/>
    </location>
</feature>
<feature type="region of interest" description="Disordered" evidence="5">
    <location>
        <begin position="520"/>
        <end position="547"/>
    </location>
</feature>
<feature type="region of interest" description="Disordered" evidence="5">
    <location>
        <begin position="584"/>
        <end position="745"/>
    </location>
</feature>
<feature type="region of interest" description="Disordered" evidence="5">
    <location>
        <begin position="900"/>
        <end position="922"/>
    </location>
</feature>
<feature type="coiled-coil region" evidence="3">
    <location>
        <begin position="97"/>
        <end position="171"/>
    </location>
</feature>
<feature type="compositionally biased region" description="Polar residues" evidence="5">
    <location>
        <begin position="204"/>
        <end position="226"/>
    </location>
</feature>
<feature type="compositionally biased region" description="Basic and acidic residues" evidence="5">
    <location>
        <begin position="610"/>
        <end position="622"/>
    </location>
</feature>
<feature type="compositionally biased region" description="Basic and acidic residues" evidence="5">
    <location>
        <begin position="673"/>
        <end position="688"/>
    </location>
</feature>
<feature type="compositionally biased region" description="Basic and acidic residues" evidence="5">
    <location>
        <begin position="904"/>
        <end position="919"/>
    </location>
</feature>
<feature type="modified residue" description="N6-acetyllysine" evidence="9">
    <location>
        <position position="85"/>
    </location>
</feature>
<feature type="modified residue" description="Phosphoserine" evidence="8">
    <location>
        <position position="456"/>
    </location>
</feature>
<feature type="modified residue" description="Phosphoserine" evidence="8">
    <location>
        <position position="460"/>
    </location>
</feature>
<feature type="modified residue" description="N6-acetyllysine; alternate" evidence="9">
    <location>
        <position position="554"/>
    </location>
</feature>
<feature type="modified residue" description="Phosphoserine" evidence="2">
    <location>
        <position position="652"/>
    </location>
</feature>
<feature type="modified residue" description="Phosphoserine" evidence="2">
    <location>
        <position position="694"/>
    </location>
</feature>
<feature type="modified residue" description="Phosphoserine" evidence="2">
    <location>
        <position position="710"/>
    </location>
</feature>
<feature type="modified residue" description="Phosphoserine" evidence="2">
    <location>
        <position position="714"/>
    </location>
</feature>
<feature type="cross-link" description="Glycyl lysine isopeptide (Lys-Gly) (interchain with G-Cter in SUMO2)" evidence="2">
    <location>
        <position position="542"/>
    </location>
</feature>
<feature type="cross-link" description="Glycyl lysine isopeptide (Lys-Gly) (interchain with G-Cter in SUMO1); alternate" evidence="2">
    <location>
        <position position="554"/>
    </location>
</feature>
<feature type="cross-link" description="Glycyl lysine isopeptide (Lys-Gly) (interchain with G-Cter in SUMO2); alternate" evidence="2">
    <location>
        <position position="554"/>
    </location>
</feature>
<feature type="cross-link" description="Glycyl lysine isopeptide (Lys-Gly) (interchain with G-Cter in SUMO2)" evidence="2">
    <location>
        <position position="582"/>
    </location>
</feature>
<feature type="cross-link" description="Glycyl lysine isopeptide (Lys-Gly) (interchain with G-Cter in SUMO2)" evidence="2">
    <location>
        <position position="648"/>
    </location>
</feature>
<feature type="cross-link" description="Glycyl lysine isopeptide (Lys-Gly) (interchain with G-Cter in SUMO2)" evidence="2">
    <location>
        <position position="685"/>
    </location>
</feature>
<feature type="splice variant" id="VSP_038218" description="In isoform 2." evidence="6">
    <location>
        <begin position="215"/>
        <end position="287"/>
    </location>
</feature>
<feature type="sequence conflict" description="In Ref. 1; BAC27812." evidence="7" ref="1">
    <original>D</original>
    <variation>G</variation>
    <location>
        <position position="811"/>
    </location>
</feature>